<keyword id="KW-0963">Cytoplasm</keyword>
<keyword id="KW-0251">Elongation factor</keyword>
<keyword id="KW-0648">Protein biosynthesis</keyword>
<comment type="function">
    <text evidence="1">Involved in peptide bond synthesis. Stimulates efficient translation and peptide-bond synthesis on native or reconstituted 70S ribosomes in vitro. Probably functions indirectly by altering the affinity of the ribosome for aminoacyl-tRNA, thus increasing their reactivity as acceptors for peptidyl transferase.</text>
</comment>
<comment type="pathway">
    <text evidence="1">Protein biosynthesis; polypeptide chain elongation.</text>
</comment>
<comment type="subcellular location">
    <subcellularLocation>
        <location evidence="1">Cytoplasm</location>
    </subcellularLocation>
</comment>
<comment type="similarity">
    <text evidence="1">Belongs to the elongation factor P family.</text>
</comment>
<dbReference type="EMBL" id="CP000681">
    <property type="protein sequence ID" value="ABP75598.1"/>
    <property type="molecule type" value="Genomic_DNA"/>
</dbReference>
<dbReference type="SMR" id="A4Y6L5"/>
<dbReference type="STRING" id="319224.Sputcn32_1875"/>
<dbReference type="KEGG" id="spc:Sputcn32_1875"/>
<dbReference type="eggNOG" id="COG0231">
    <property type="taxonomic scope" value="Bacteria"/>
</dbReference>
<dbReference type="HOGENOM" id="CLU_074944_2_1_6"/>
<dbReference type="UniPathway" id="UPA00345"/>
<dbReference type="GO" id="GO:0005737">
    <property type="term" value="C:cytoplasm"/>
    <property type="evidence" value="ECO:0007669"/>
    <property type="project" value="UniProtKB-SubCell"/>
</dbReference>
<dbReference type="GO" id="GO:0003746">
    <property type="term" value="F:translation elongation factor activity"/>
    <property type="evidence" value="ECO:0007669"/>
    <property type="project" value="UniProtKB-UniRule"/>
</dbReference>
<dbReference type="GO" id="GO:0043043">
    <property type="term" value="P:peptide biosynthetic process"/>
    <property type="evidence" value="ECO:0007669"/>
    <property type="project" value="InterPro"/>
</dbReference>
<dbReference type="CDD" id="cd04470">
    <property type="entry name" value="S1_EF-P_repeat_1"/>
    <property type="match status" value="1"/>
</dbReference>
<dbReference type="CDD" id="cd05794">
    <property type="entry name" value="S1_EF-P_repeat_2"/>
    <property type="match status" value="1"/>
</dbReference>
<dbReference type="FunFam" id="2.30.30.30:FF:000003">
    <property type="entry name" value="Elongation factor P"/>
    <property type="match status" value="1"/>
</dbReference>
<dbReference type="FunFam" id="2.40.50.140:FF:000004">
    <property type="entry name" value="Elongation factor P"/>
    <property type="match status" value="1"/>
</dbReference>
<dbReference type="FunFam" id="2.40.50.140:FF:000009">
    <property type="entry name" value="Elongation factor P"/>
    <property type="match status" value="1"/>
</dbReference>
<dbReference type="Gene3D" id="2.30.30.30">
    <property type="match status" value="1"/>
</dbReference>
<dbReference type="Gene3D" id="2.40.50.140">
    <property type="entry name" value="Nucleic acid-binding proteins"/>
    <property type="match status" value="2"/>
</dbReference>
<dbReference type="HAMAP" id="MF_00141">
    <property type="entry name" value="EF_P"/>
    <property type="match status" value="1"/>
</dbReference>
<dbReference type="InterPro" id="IPR015365">
    <property type="entry name" value="Elong-fact-P_C"/>
</dbReference>
<dbReference type="InterPro" id="IPR012340">
    <property type="entry name" value="NA-bd_OB-fold"/>
</dbReference>
<dbReference type="InterPro" id="IPR014722">
    <property type="entry name" value="Rib_uL2_dom2"/>
</dbReference>
<dbReference type="InterPro" id="IPR020599">
    <property type="entry name" value="Transl_elong_fac_P/YeiP"/>
</dbReference>
<dbReference type="InterPro" id="IPR013185">
    <property type="entry name" value="Transl_elong_KOW-like"/>
</dbReference>
<dbReference type="InterPro" id="IPR001059">
    <property type="entry name" value="Transl_elong_P/YeiP_cen"/>
</dbReference>
<dbReference type="InterPro" id="IPR011768">
    <property type="entry name" value="Transl_elongation_fac_P"/>
</dbReference>
<dbReference type="InterPro" id="IPR008991">
    <property type="entry name" value="Translation_prot_SH3-like_sf"/>
</dbReference>
<dbReference type="NCBIfam" id="TIGR00038">
    <property type="entry name" value="efp"/>
    <property type="match status" value="1"/>
</dbReference>
<dbReference type="NCBIfam" id="NF001810">
    <property type="entry name" value="PRK00529.1"/>
    <property type="match status" value="1"/>
</dbReference>
<dbReference type="PANTHER" id="PTHR30053">
    <property type="entry name" value="ELONGATION FACTOR P"/>
    <property type="match status" value="1"/>
</dbReference>
<dbReference type="PANTHER" id="PTHR30053:SF12">
    <property type="entry name" value="ELONGATION FACTOR P (EF-P) FAMILY PROTEIN"/>
    <property type="match status" value="1"/>
</dbReference>
<dbReference type="Pfam" id="PF01132">
    <property type="entry name" value="EFP"/>
    <property type="match status" value="1"/>
</dbReference>
<dbReference type="Pfam" id="PF08207">
    <property type="entry name" value="EFP_N"/>
    <property type="match status" value="1"/>
</dbReference>
<dbReference type="Pfam" id="PF09285">
    <property type="entry name" value="Elong-fact-P_C"/>
    <property type="match status" value="1"/>
</dbReference>
<dbReference type="PIRSF" id="PIRSF005901">
    <property type="entry name" value="EF-P"/>
    <property type="match status" value="1"/>
</dbReference>
<dbReference type="SMART" id="SM01185">
    <property type="entry name" value="EFP"/>
    <property type="match status" value="1"/>
</dbReference>
<dbReference type="SMART" id="SM00841">
    <property type="entry name" value="Elong-fact-P_C"/>
    <property type="match status" value="1"/>
</dbReference>
<dbReference type="SUPFAM" id="SSF50249">
    <property type="entry name" value="Nucleic acid-binding proteins"/>
    <property type="match status" value="2"/>
</dbReference>
<dbReference type="SUPFAM" id="SSF50104">
    <property type="entry name" value="Translation proteins SH3-like domain"/>
    <property type="match status" value="1"/>
</dbReference>
<name>EFP_SHEPC</name>
<protein>
    <recommendedName>
        <fullName evidence="1">Elongation factor P</fullName>
        <shortName evidence="1">EF-P</shortName>
    </recommendedName>
</protein>
<reference key="1">
    <citation type="submission" date="2007-04" db="EMBL/GenBank/DDBJ databases">
        <title>Complete sequence of Shewanella putrefaciens CN-32.</title>
        <authorList>
            <consortium name="US DOE Joint Genome Institute"/>
            <person name="Copeland A."/>
            <person name="Lucas S."/>
            <person name="Lapidus A."/>
            <person name="Barry K."/>
            <person name="Detter J.C."/>
            <person name="Glavina del Rio T."/>
            <person name="Hammon N."/>
            <person name="Israni S."/>
            <person name="Dalin E."/>
            <person name="Tice H."/>
            <person name="Pitluck S."/>
            <person name="Chain P."/>
            <person name="Malfatti S."/>
            <person name="Shin M."/>
            <person name="Vergez L."/>
            <person name="Schmutz J."/>
            <person name="Larimer F."/>
            <person name="Land M."/>
            <person name="Hauser L."/>
            <person name="Kyrpides N."/>
            <person name="Mikhailova N."/>
            <person name="Romine M.F."/>
            <person name="Fredrickson J."/>
            <person name="Tiedje J."/>
            <person name="Richardson P."/>
        </authorList>
    </citation>
    <scope>NUCLEOTIDE SEQUENCE [LARGE SCALE GENOMIC DNA]</scope>
    <source>
        <strain>CN-32 / ATCC BAA-453</strain>
    </source>
</reference>
<evidence type="ECO:0000255" key="1">
    <source>
        <dbReference type="HAMAP-Rule" id="MF_00141"/>
    </source>
</evidence>
<gene>
    <name evidence="1" type="primary">efp</name>
    <name type="ordered locus">Sputcn32_1875</name>
</gene>
<feature type="chain" id="PRO_1000010850" description="Elongation factor P">
    <location>
        <begin position="1"/>
        <end position="186"/>
    </location>
</feature>
<sequence>MKTAHEIRPGNVIMLDGSPWVVQKTETTRSGRNAAIVKLKLKNLLLNSGTETTFKGEDKLEDIVLDRLDCTYSYFADPMYVFMDAEYNQYDVEAENLGDAAAYIVDGMEETCQVTFYDGKAISVEMPTTIVREVIYTEPSARGDTSGKVMKPATITGGGTVSVADFVKVGDKIEIDTRTGEFKKRV</sequence>
<organism>
    <name type="scientific">Shewanella putrefaciens (strain CN-32 / ATCC BAA-453)</name>
    <dbReference type="NCBI Taxonomy" id="319224"/>
    <lineage>
        <taxon>Bacteria</taxon>
        <taxon>Pseudomonadati</taxon>
        <taxon>Pseudomonadota</taxon>
        <taxon>Gammaproteobacteria</taxon>
        <taxon>Alteromonadales</taxon>
        <taxon>Shewanellaceae</taxon>
        <taxon>Shewanella</taxon>
    </lineage>
</organism>
<proteinExistence type="inferred from homology"/>
<accession>A4Y6L5</accession>